<gene>
    <name evidence="1" type="primary">rplR</name>
    <name type="ordered locus">Teth514_0883</name>
</gene>
<feature type="chain" id="PRO_1000142732" description="Large ribosomal subunit protein uL18">
    <location>
        <begin position="1"/>
        <end position="121"/>
    </location>
</feature>
<comment type="function">
    <text evidence="1">This is one of the proteins that bind and probably mediate the attachment of the 5S RNA into the large ribosomal subunit, where it forms part of the central protuberance.</text>
</comment>
<comment type="subunit">
    <text evidence="1">Part of the 50S ribosomal subunit; part of the 5S rRNA/L5/L18/L25 subcomplex. Contacts the 5S and 23S rRNAs.</text>
</comment>
<comment type="similarity">
    <text evidence="1">Belongs to the universal ribosomal protein uL18 family.</text>
</comment>
<name>RL18_THEPX</name>
<sequence>MITKPNRNELRKRRHLRVRKKVFGTPERPRLNVFRSLKHIYAQIIDDTKGHTLVHASTLDPELRGIAKGANKQSAKLVGELIAKRALEKGIKDVVFDRGGYIYHGVVKELADAARQAGLNF</sequence>
<evidence type="ECO:0000255" key="1">
    <source>
        <dbReference type="HAMAP-Rule" id="MF_01337"/>
    </source>
</evidence>
<evidence type="ECO:0000305" key="2"/>
<reference key="1">
    <citation type="submission" date="2008-01" db="EMBL/GenBank/DDBJ databases">
        <title>Complete sequence of Thermoanaerobacter sp. X514.</title>
        <authorList>
            <consortium name="US DOE Joint Genome Institute"/>
            <person name="Copeland A."/>
            <person name="Lucas S."/>
            <person name="Lapidus A."/>
            <person name="Barry K."/>
            <person name="Glavina del Rio T."/>
            <person name="Dalin E."/>
            <person name="Tice H."/>
            <person name="Pitluck S."/>
            <person name="Bruce D."/>
            <person name="Goodwin L."/>
            <person name="Saunders E."/>
            <person name="Brettin T."/>
            <person name="Detter J.C."/>
            <person name="Han C."/>
            <person name="Schmutz J."/>
            <person name="Larimer F."/>
            <person name="Land M."/>
            <person name="Hauser L."/>
            <person name="Kyrpides N."/>
            <person name="Kim E."/>
            <person name="Hemme C."/>
            <person name="Fields M.W."/>
            <person name="He Z."/>
            <person name="Zhou J."/>
            <person name="Richardson P."/>
        </authorList>
    </citation>
    <scope>NUCLEOTIDE SEQUENCE [LARGE SCALE GENOMIC DNA]</scope>
    <source>
        <strain>X514</strain>
    </source>
</reference>
<proteinExistence type="inferred from homology"/>
<protein>
    <recommendedName>
        <fullName evidence="1">Large ribosomal subunit protein uL18</fullName>
    </recommendedName>
    <alternativeName>
        <fullName evidence="2">50S ribosomal protein L18</fullName>
    </alternativeName>
</protein>
<keyword id="KW-0687">Ribonucleoprotein</keyword>
<keyword id="KW-0689">Ribosomal protein</keyword>
<keyword id="KW-0694">RNA-binding</keyword>
<keyword id="KW-0699">rRNA-binding</keyword>
<accession>B0K5Q9</accession>
<dbReference type="EMBL" id="CP000923">
    <property type="protein sequence ID" value="ABY92185.1"/>
    <property type="molecule type" value="Genomic_DNA"/>
</dbReference>
<dbReference type="RefSeq" id="WP_012268641.1">
    <property type="nucleotide sequence ID" value="NC_010320.1"/>
</dbReference>
<dbReference type="SMR" id="B0K5Q9"/>
<dbReference type="KEGG" id="tex:Teth514_0883"/>
<dbReference type="HOGENOM" id="CLU_098841_0_1_9"/>
<dbReference type="Proteomes" id="UP000002155">
    <property type="component" value="Chromosome"/>
</dbReference>
<dbReference type="GO" id="GO:0022625">
    <property type="term" value="C:cytosolic large ribosomal subunit"/>
    <property type="evidence" value="ECO:0007669"/>
    <property type="project" value="TreeGrafter"/>
</dbReference>
<dbReference type="GO" id="GO:0008097">
    <property type="term" value="F:5S rRNA binding"/>
    <property type="evidence" value="ECO:0007669"/>
    <property type="project" value="TreeGrafter"/>
</dbReference>
<dbReference type="GO" id="GO:0003735">
    <property type="term" value="F:structural constituent of ribosome"/>
    <property type="evidence" value="ECO:0007669"/>
    <property type="project" value="InterPro"/>
</dbReference>
<dbReference type="GO" id="GO:0006412">
    <property type="term" value="P:translation"/>
    <property type="evidence" value="ECO:0007669"/>
    <property type="project" value="UniProtKB-UniRule"/>
</dbReference>
<dbReference type="CDD" id="cd00432">
    <property type="entry name" value="Ribosomal_L18_L5e"/>
    <property type="match status" value="1"/>
</dbReference>
<dbReference type="FunFam" id="3.30.420.100:FF:000001">
    <property type="entry name" value="50S ribosomal protein L18"/>
    <property type="match status" value="1"/>
</dbReference>
<dbReference type="Gene3D" id="3.30.420.100">
    <property type="match status" value="1"/>
</dbReference>
<dbReference type="HAMAP" id="MF_01337_B">
    <property type="entry name" value="Ribosomal_uL18_B"/>
    <property type="match status" value="1"/>
</dbReference>
<dbReference type="InterPro" id="IPR004389">
    <property type="entry name" value="Ribosomal_uL18_bac-type"/>
</dbReference>
<dbReference type="InterPro" id="IPR005484">
    <property type="entry name" value="Ribosomal_uL18_bac/euk"/>
</dbReference>
<dbReference type="NCBIfam" id="TIGR00060">
    <property type="entry name" value="L18_bact"/>
    <property type="match status" value="1"/>
</dbReference>
<dbReference type="PANTHER" id="PTHR12899">
    <property type="entry name" value="39S RIBOSOMAL PROTEIN L18, MITOCHONDRIAL"/>
    <property type="match status" value="1"/>
</dbReference>
<dbReference type="PANTHER" id="PTHR12899:SF3">
    <property type="entry name" value="LARGE RIBOSOMAL SUBUNIT PROTEIN UL18M"/>
    <property type="match status" value="1"/>
</dbReference>
<dbReference type="Pfam" id="PF00861">
    <property type="entry name" value="Ribosomal_L18p"/>
    <property type="match status" value="1"/>
</dbReference>
<dbReference type="SUPFAM" id="SSF53137">
    <property type="entry name" value="Translational machinery components"/>
    <property type="match status" value="1"/>
</dbReference>
<organism>
    <name type="scientific">Thermoanaerobacter sp. (strain X514)</name>
    <dbReference type="NCBI Taxonomy" id="399726"/>
    <lineage>
        <taxon>Bacteria</taxon>
        <taxon>Bacillati</taxon>
        <taxon>Bacillota</taxon>
        <taxon>Clostridia</taxon>
        <taxon>Thermoanaerobacterales</taxon>
        <taxon>Thermoanaerobacteraceae</taxon>
        <taxon>Thermoanaerobacter</taxon>
    </lineage>
</organism>